<accession>Q89682</accession>
<accession>A0A0F7KKH0</accession>
<keyword id="KW-1185">Reference proteome</keyword>
<keyword id="KW-0694">RNA-binding</keyword>
<keyword id="KW-0813">Transport</keyword>
<keyword id="KW-0916">Viral movement protein</keyword>
<dbReference type="EMBL" id="D12536">
    <property type="protein sequence ID" value="BAA02102.1"/>
    <property type="molecule type" value="Genomic_RNA"/>
</dbReference>
<dbReference type="EMBL" id="M29671">
    <property type="protein sequence ID" value="AAB02432.1"/>
    <property type="molecule type" value="Genomic_RNA"/>
</dbReference>
<dbReference type="EMBL" id="FJ621526">
    <property type="protein sequence ID" value="ACT53373.1"/>
    <property type="molecule type" value="Genomic_RNA"/>
</dbReference>
<dbReference type="EMBL" id="KR094068">
    <property type="protein sequence ID" value="AKH41058.1"/>
    <property type="molecule type" value="Genomic_RNA"/>
</dbReference>
<dbReference type="KEGG" id="vg:1491978"/>
<dbReference type="Proteomes" id="UP000202003">
    <property type="component" value="Genome"/>
</dbReference>
<dbReference type="GO" id="GO:0003723">
    <property type="term" value="F:RNA binding"/>
    <property type="evidence" value="ECO:0007669"/>
    <property type="project" value="UniProtKB-KW"/>
</dbReference>
<dbReference type="GO" id="GO:0046740">
    <property type="term" value="P:transport of virus in host, cell to cell"/>
    <property type="evidence" value="ECO:0007669"/>
    <property type="project" value="UniProtKB-KW"/>
</dbReference>
<dbReference type="InterPro" id="IPR007982">
    <property type="entry name" value="Tombusvirus_movement"/>
</dbReference>
<dbReference type="Pfam" id="PF05318">
    <property type="entry name" value="Tombus_movement"/>
    <property type="match status" value="1"/>
</dbReference>
<evidence type="ECO:0000256" key="1">
    <source>
        <dbReference type="SAM" id="MobiDB-lite"/>
    </source>
</evidence>
<evidence type="ECO:0000269" key="2">
    <source>
    </source>
</evidence>
<evidence type="ECO:0000305" key="3"/>
<evidence type="ECO:0000312" key="4">
    <source>
        <dbReference type="EMBL" id="AKH41058.1"/>
    </source>
</evidence>
<gene>
    <name type="ORF">ORF2</name>
</gene>
<name>MP1_MNSV</name>
<proteinExistence type="evidence at protein level"/>
<organism>
    <name type="scientific">Melon necrotic spot virus</name>
    <name type="common">MNSV</name>
    <dbReference type="NCBI Taxonomy" id="11987"/>
    <lineage>
        <taxon>Viruses</taxon>
        <taxon>Riboviria</taxon>
        <taxon>Orthornavirae</taxon>
        <taxon>Kitrinoviricota</taxon>
        <taxon>Tolucaviricetes</taxon>
        <taxon>Tolivirales</taxon>
        <taxon>Tombusviridae</taxon>
        <taxon>Procedovirinae</taxon>
        <taxon>Gammacarmovirus</taxon>
        <taxon>Gammacarmovirus melonis</taxon>
    </lineage>
</organism>
<organismHost>
    <name type="scientific">Cucumis melo</name>
    <name type="common">Muskmelon</name>
    <dbReference type="NCBI Taxonomy" id="3656"/>
</organismHost>
<organismHost>
    <name type="scientific">Cucumis sativus</name>
    <name type="common">Cucumber</name>
    <dbReference type="NCBI Taxonomy" id="3659"/>
</organismHost>
<protein>
    <recommendedName>
        <fullName>Double gene block protein 1</fullName>
        <shortName>DGBp1</shortName>
    </recommendedName>
    <alternativeName>
        <fullName>Movement protein P7A</fullName>
    </alternativeName>
</protein>
<comment type="function">
    <text evidence="2">Cell-to-cell movement. Displays RNA-binding activity.</text>
</comment>
<comment type="subunit">
    <text evidence="2">Homodimer.</text>
</comment>
<comment type="similarity">
    <text evidence="3">Belongs to the carmovirus double gene block protein 1 family.</text>
</comment>
<sequence length="65" mass="7121">MDSQRTVELTNPRGRSKERGDSGGKQKNSMGRKIANDAISESKQGVMGASTYIADKIKVTINFNF</sequence>
<reference key="1">
    <citation type="journal article" date="1990" name="J. Gen. Virol.">
        <title>Nucleotide sequence and genomic organization of melon necrotic spot virus.</title>
        <authorList>
            <person name="Riviere C.J."/>
            <person name="Rochon D.M."/>
        </authorList>
    </citation>
    <scope>NUCLEOTIDE SEQUENCE [GENOMIC RNA]</scope>
    <scope>IDENTIFICATION</scope>
</reference>
<reference key="2">
    <citation type="journal article" date="2010" name="Plant Pathol.">
        <title>Genetic diversity of Melon necrotic spot virus and Olpidium isolates from different origins.</title>
        <authorList>
            <person name="Herrera-Vasquez J.A."/>
            <person name="Cordoba-Selles M.C."/>
            <person name="Cebrian M.C."/>
            <person name="Rossello J.A."/>
            <person name="Alfaro-Fernandez A."/>
            <person name="Jorda C."/>
        </authorList>
    </citation>
    <scope>NUCLEOTIDE SEQUENCE [GENOMIC RNA]</scope>
    <source>
        <strain>Isolate Spain/SP-13/2001</strain>
    </source>
</reference>
<reference key="3">
    <citation type="journal article" date="2015" name="Genome Announc.">
        <title>Complete Genome Sequence of an Emerging Melon Necrotic Spot Virus Isolate Infecting Greenhouse Cucumber in North America.</title>
        <authorList>
            <person name="Li R."/>
            <person name="Zheng Y."/>
            <person name="Fei Z."/>
            <person name="Ling K.S."/>
        </authorList>
    </citation>
    <scope>NUCLEOTIDE SEQUENCE [GENOMIC RNA]</scope>
    <source>
        <strain evidence="4">ABCA13-01</strain>
    </source>
</reference>
<reference key="4">
    <citation type="journal article" date="2009" name="Virology">
        <title>A self-interacting carmovirus movement protein plays a role in binding of viral RNA during the cell-to-cell movement and shows an actin cytoskeleton dependent location in cell periphery.</title>
        <authorList>
            <person name="Genoves A."/>
            <person name="Navarro J.A."/>
            <person name="Pallas V."/>
        </authorList>
    </citation>
    <scope>FUNCTION</scope>
    <scope>MUTAGENESIS OF 13-ARG--ARG-19; 25-LYS--LYS-27; 32-LYS-LYS-33 AND LYS-43</scope>
    <scope>SUBUNIT</scope>
</reference>
<feature type="chain" id="PRO_0000398307" description="Double gene block protein 1">
    <location>
        <begin position="1"/>
        <end position="65"/>
    </location>
</feature>
<feature type="region of interest" description="Disordered" evidence="1">
    <location>
        <begin position="1"/>
        <end position="41"/>
    </location>
</feature>
<feature type="region of interest" description="RNA-binding" evidence="3">
    <location>
        <begin position="17"/>
        <end position="43"/>
    </location>
</feature>
<feature type="compositionally biased region" description="Basic and acidic residues" evidence="1">
    <location>
        <begin position="15"/>
        <end position="24"/>
    </location>
</feature>
<feature type="mutagenesis site" description="Complete loss of cell-to-cell movement ability." evidence="2">
    <original>RGRSKER</original>
    <variation>AGASAEA</variation>
    <location>
        <begin position="13"/>
        <end position="19"/>
    </location>
</feature>
<feature type="mutagenesis site" description="Complete loss of cell-to-cell movement ability." evidence="2">
    <original>KQK</original>
    <variation>AQA</variation>
    <location>
        <begin position="25"/>
        <end position="27"/>
    </location>
</feature>
<feature type="mutagenesis site" description="Complete loss of cell-to-cell movement ability. Drastic loss of RNA-binding activity." evidence="2">
    <original>RK</original>
    <variation>AA</variation>
    <location>
        <begin position="32"/>
        <end position="33"/>
    </location>
</feature>
<feature type="mutagenesis site" description="35% loss of cell-to-cell movement ability." evidence="2">
    <original>K</original>
    <variation>A</variation>
    <location>
        <position position="43"/>
    </location>
</feature>